<proteinExistence type="inferred from homology"/>
<organism>
    <name type="scientific">Bordetella avium (strain 197N)</name>
    <dbReference type="NCBI Taxonomy" id="360910"/>
    <lineage>
        <taxon>Bacteria</taxon>
        <taxon>Pseudomonadati</taxon>
        <taxon>Pseudomonadota</taxon>
        <taxon>Betaproteobacteria</taxon>
        <taxon>Burkholderiales</taxon>
        <taxon>Alcaligenaceae</taxon>
        <taxon>Bordetella</taxon>
    </lineage>
</organism>
<accession>Q2KUD7</accession>
<gene>
    <name evidence="1" type="primary">purT</name>
    <name type="ordered locus">BAV3113</name>
</gene>
<protein>
    <recommendedName>
        <fullName evidence="1">Formate-dependent phosphoribosylglycinamide formyltransferase</fullName>
        <ecNumber evidence="1">6.3.1.21</ecNumber>
    </recommendedName>
    <alternativeName>
        <fullName evidence="1">5'-phosphoribosylglycinamide transformylase 2</fullName>
    </alternativeName>
    <alternativeName>
        <fullName evidence="1">Formate-dependent GAR transformylase</fullName>
    </alternativeName>
    <alternativeName>
        <fullName evidence="1">GAR transformylase 2</fullName>
        <shortName evidence="1">GART 2</shortName>
    </alternativeName>
    <alternativeName>
        <fullName evidence="1">Non-folate glycinamide ribonucleotide transformylase</fullName>
    </alternativeName>
    <alternativeName>
        <fullName evidence="1">Phosphoribosylglycinamide formyltransferase 2</fullName>
    </alternativeName>
</protein>
<feature type="chain" id="PRO_0000319130" description="Formate-dependent phosphoribosylglycinamide formyltransferase">
    <location>
        <begin position="1"/>
        <end position="405"/>
    </location>
</feature>
<feature type="domain" description="ATP-grasp" evidence="1">
    <location>
        <begin position="125"/>
        <end position="320"/>
    </location>
</feature>
<feature type="binding site" evidence="1">
    <location>
        <begin position="27"/>
        <end position="28"/>
    </location>
    <ligand>
        <name>N(1)-(5-phospho-beta-D-ribosyl)glycinamide</name>
        <dbReference type="ChEBI" id="CHEBI:143788"/>
    </ligand>
</feature>
<feature type="binding site" evidence="1">
    <location>
        <position position="87"/>
    </location>
    <ligand>
        <name>N(1)-(5-phospho-beta-D-ribosyl)glycinamide</name>
        <dbReference type="ChEBI" id="CHEBI:143788"/>
    </ligand>
</feature>
<feature type="binding site" evidence="1">
    <location>
        <position position="120"/>
    </location>
    <ligand>
        <name>ATP</name>
        <dbReference type="ChEBI" id="CHEBI:30616"/>
    </ligand>
</feature>
<feature type="binding site" evidence="1">
    <location>
        <position position="162"/>
    </location>
    <ligand>
        <name>ATP</name>
        <dbReference type="ChEBI" id="CHEBI:30616"/>
    </ligand>
</feature>
<feature type="binding site" evidence="1">
    <location>
        <begin position="167"/>
        <end position="172"/>
    </location>
    <ligand>
        <name>ATP</name>
        <dbReference type="ChEBI" id="CHEBI:30616"/>
    </ligand>
</feature>
<feature type="binding site" evidence="1">
    <location>
        <begin position="202"/>
        <end position="205"/>
    </location>
    <ligand>
        <name>ATP</name>
        <dbReference type="ChEBI" id="CHEBI:30616"/>
    </ligand>
</feature>
<feature type="binding site" evidence="1">
    <location>
        <position position="210"/>
    </location>
    <ligand>
        <name>ATP</name>
        <dbReference type="ChEBI" id="CHEBI:30616"/>
    </ligand>
</feature>
<feature type="binding site" evidence="1">
    <location>
        <position position="279"/>
    </location>
    <ligand>
        <name>Mg(2+)</name>
        <dbReference type="ChEBI" id="CHEBI:18420"/>
    </ligand>
</feature>
<feature type="binding site" evidence="1">
    <location>
        <position position="291"/>
    </location>
    <ligand>
        <name>Mg(2+)</name>
        <dbReference type="ChEBI" id="CHEBI:18420"/>
    </ligand>
</feature>
<feature type="binding site" evidence="1">
    <location>
        <position position="298"/>
    </location>
    <ligand>
        <name>N(1)-(5-phospho-beta-D-ribosyl)glycinamide</name>
        <dbReference type="ChEBI" id="CHEBI:143788"/>
    </ligand>
</feature>
<feature type="binding site" evidence="1">
    <location>
        <position position="367"/>
    </location>
    <ligand>
        <name>N(1)-(5-phospho-beta-D-ribosyl)glycinamide</name>
        <dbReference type="ChEBI" id="CHEBI:143788"/>
    </ligand>
</feature>
<feature type="binding site" evidence="1">
    <location>
        <begin position="374"/>
        <end position="375"/>
    </location>
    <ligand>
        <name>N(1)-(5-phospho-beta-D-ribosyl)glycinamide</name>
        <dbReference type="ChEBI" id="CHEBI:143788"/>
    </ligand>
</feature>
<name>PURT_BORA1</name>
<evidence type="ECO:0000255" key="1">
    <source>
        <dbReference type="HAMAP-Rule" id="MF_01643"/>
    </source>
</evidence>
<keyword id="KW-0067">ATP-binding</keyword>
<keyword id="KW-0436">Ligase</keyword>
<keyword id="KW-0460">Magnesium</keyword>
<keyword id="KW-0479">Metal-binding</keyword>
<keyword id="KW-0547">Nucleotide-binding</keyword>
<keyword id="KW-0658">Purine biosynthesis</keyword>
<keyword id="KW-1185">Reference proteome</keyword>
<comment type="function">
    <text evidence="1">Involved in the de novo purine biosynthesis. Catalyzes the transfer of formate to 5-phospho-ribosyl-glycinamide (GAR), producing 5-phospho-ribosyl-N-formylglycinamide (FGAR). Formate is provided by PurU via hydrolysis of 10-formyl-tetrahydrofolate.</text>
</comment>
<comment type="catalytic activity">
    <reaction evidence="1">
        <text>N(1)-(5-phospho-beta-D-ribosyl)glycinamide + formate + ATP = N(2)-formyl-N(1)-(5-phospho-beta-D-ribosyl)glycinamide + ADP + phosphate + H(+)</text>
        <dbReference type="Rhea" id="RHEA:24829"/>
        <dbReference type="ChEBI" id="CHEBI:15378"/>
        <dbReference type="ChEBI" id="CHEBI:15740"/>
        <dbReference type="ChEBI" id="CHEBI:30616"/>
        <dbReference type="ChEBI" id="CHEBI:43474"/>
        <dbReference type="ChEBI" id="CHEBI:143788"/>
        <dbReference type="ChEBI" id="CHEBI:147286"/>
        <dbReference type="ChEBI" id="CHEBI:456216"/>
        <dbReference type="EC" id="6.3.1.21"/>
    </reaction>
    <physiologicalReaction direction="left-to-right" evidence="1">
        <dbReference type="Rhea" id="RHEA:24830"/>
    </physiologicalReaction>
</comment>
<comment type="pathway">
    <text evidence="1">Purine metabolism; IMP biosynthesis via de novo pathway; N(2)-formyl-N(1)-(5-phospho-D-ribosyl)glycinamide from N(1)-(5-phospho-D-ribosyl)glycinamide (formate route): step 1/1.</text>
</comment>
<comment type="subunit">
    <text evidence="1">Homodimer.</text>
</comment>
<comment type="similarity">
    <text evidence="1">Belongs to the PurK/PurT family.</text>
</comment>
<sequence>MSSFPAPVLGTPLSPSATRVMLLGSGELGKEVIIALQRLGVEVIAVDRYADAPGHQVAHRAHVVSMTDPAALRAVIEQERPHIIVPEIEAIATDLLVELEQEGVARVTPTARAARLTMNREGIRRLAAETLGLPTSPYQFVDTQDALQQAIDGGIGYPCVIKPVMSSSGKGQSVIRGPGDLDAAWRYAQEGGRVGGGRAIVEGFIDFDYEITLLTVRARGVDGQIETHFCDPIGHKQVDGDYVESWQPHPMSPAALARAREIALGVTGNLGGLGIFGVELFVAGDQVWFSEVSPRPHDTGMVTMITQVQNEFELHARALLGLPVDTALRQPGASSVIYGGLDGRGVTFHGVAQALAEPGTDVRLFGKPEAFVKRRMGVGLAVADTLDAAREKARRVSAAVSVKAA</sequence>
<dbReference type="EC" id="6.3.1.21" evidence="1"/>
<dbReference type="EMBL" id="AM167904">
    <property type="protein sequence ID" value="CAJ50723.1"/>
    <property type="molecule type" value="Genomic_DNA"/>
</dbReference>
<dbReference type="RefSeq" id="WP_012418751.1">
    <property type="nucleotide sequence ID" value="NC_010645.1"/>
</dbReference>
<dbReference type="SMR" id="Q2KUD7"/>
<dbReference type="STRING" id="360910.BAV3113"/>
<dbReference type="GeneID" id="92933630"/>
<dbReference type="KEGG" id="bav:BAV3113"/>
<dbReference type="eggNOG" id="COG0027">
    <property type="taxonomic scope" value="Bacteria"/>
</dbReference>
<dbReference type="HOGENOM" id="CLU_011534_1_3_4"/>
<dbReference type="OrthoDB" id="9804625at2"/>
<dbReference type="UniPathway" id="UPA00074">
    <property type="reaction ID" value="UER00127"/>
</dbReference>
<dbReference type="Proteomes" id="UP000001977">
    <property type="component" value="Chromosome"/>
</dbReference>
<dbReference type="GO" id="GO:0005829">
    <property type="term" value="C:cytosol"/>
    <property type="evidence" value="ECO:0007669"/>
    <property type="project" value="TreeGrafter"/>
</dbReference>
<dbReference type="GO" id="GO:0005524">
    <property type="term" value="F:ATP binding"/>
    <property type="evidence" value="ECO:0007669"/>
    <property type="project" value="UniProtKB-UniRule"/>
</dbReference>
<dbReference type="GO" id="GO:0000287">
    <property type="term" value="F:magnesium ion binding"/>
    <property type="evidence" value="ECO:0007669"/>
    <property type="project" value="InterPro"/>
</dbReference>
<dbReference type="GO" id="GO:0043815">
    <property type="term" value="F:phosphoribosylglycinamide formyltransferase 2 activity"/>
    <property type="evidence" value="ECO:0007669"/>
    <property type="project" value="UniProtKB-UniRule"/>
</dbReference>
<dbReference type="GO" id="GO:0004644">
    <property type="term" value="F:phosphoribosylglycinamide formyltransferase activity"/>
    <property type="evidence" value="ECO:0007669"/>
    <property type="project" value="InterPro"/>
</dbReference>
<dbReference type="GO" id="GO:0006189">
    <property type="term" value="P:'de novo' IMP biosynthetic process"/>
    <property type="evidence" value="ECO:0007669"/>
    <property type="project" value="UniProtKB-UniRule"/>
</dbReference>
<dbReference type="FunFam" id="3.30.1490.20:FF:000013">
    <property type="entry name" value="Formate-dependent phosphoribosylglycinamide formyltransferase"/>
    <property type="match status" value="1"/>
</dbReference>
<dbReference type="FunFam" id="3.40.50.20:FF:000007">
    <property type="entry name" value="Formate-dependent phosphoribosylglycinamide formyltransferase"/>
    <property type="match status" value="1"/>
</dbReference>
<dbReference type="Gene3D" id="3.40.50.20">
    <property type="match status" value="1"/>
</dbReference>
<dbReference type="Gene3D" id="3.30.1490.20">
    <property type="entry name" value="ATP-grasp fold, A domain"/>
    <property type="match status" value="1"/>
</dbReference>
<dbReference type="Gene3D" id="3.30.470.20">
    <property type="entry name" value="ATP-grasp fold, B domain"/>
    <property type="match status" value="1"/>
</dbReference>
<dbReference type="HAMAP" id="MF_01643">
    <property type="entry name" value="PurT"/>
    <property type="match status" value="1"/>
</dbReference>
<dbReference type="InterPro" id="IPR011761">
    <property type="entry name" value="ATP-grasp"/>
</dbReference>
<dbReference type="InterPro" id="IPR003135">
    <property type="entry name" value="ATP-grasp_carboxylate-amine"/>
</dbReference>
<dbReference type="InterPro" id="IPR013815">
    <property type="entry name" value="ATP_grasp_subdomain_1"/>
</dbReference>
<dbReference type="InterPro" id="IPR016185">
    <property type="entry name" value="PreATP-grasp_dom_sf"/>
</dbReference>
<dbReference type="InterPro" id="IPR005862">
    <property type="entry name" value="PurT"/>
</dbReference>
<dbReference type="InterPro" id="IPR054350">
    <property type="entry name" value="PurT/PurK_preATP-grasp"/>
</dbReference>
<dbReference type="InterPro" id="IPR048740">
    <property type="entry name" value="PurT_C"/>
</dbReference>
<dbReference type="InterPro" id="IPR011054">
    <property type="entry name" value="Rudment_hybrid_motif"/>
</dbReference>
<dbReference type="NCBIfam" id="NF006766">
    <property type="entry name" value="PRK09288.1"/>
    <property type="match status" value="1"/>
</dbReference>
<dbReference type="NCBIfam" id="TIGR01142">
    <property type="entry name" value="purT"/>
    <property type="match status" value="1"/>
</dbReference>
<dbReference type="PANTHER" id="PTHR43055">
    <property type="entry name" value="FORMATE-DEPENDENT PHOSPHORIBOSYLGLYCINAMIDE FORMYLTRANSFERASE"/>
    <property type="match status" value="1"/>
</dbReference>
<dbReference type="PANTHER" id="PTHR43055:SF1">
    <property type="entry name" value="FORMATE-DEPENDENT PHOSPHORIBOSYLGLYCINAMIDE FORMYLTRANSFERASE"/>
    <property type="match status" value="1"/>
</dbReference>
<dbReference type="Pfam" id="PF02222">
    <property type="entry name" value="ATP-grasp"/>
    <property type="match status" value="1"/>
</dbReference>
<dbReference type="Pfam" id="PF21244">
    <property type="entry name" value="PurT_C"/>
    <property type="match status" value="1"/>
</dbReference>
<dbReference type="Pfam" id="PF22660">
    <property type="entry name" value="RS_preATP-grasp-like"/>
    <property type="match status" value="1"/>
</dbReference>
<dbReference type="SUPFAM" id="SSF56059">
    <property type="entry name" value="Glutathione synthetase ATP-binding domain-like"/>
    <property type="match status" value="1"/>
</dbReference>
<dbReference type="SUPFAM" id="SSF52440">
    <property type="entry name" value="PreATP-grasp domain"/>
    <property type="match status" value="1"/>
</dbReference>
<dbReference type="SUPFAM" id="SSF51246">
    <property type="entry name" value="Rudiment single hybrid motif"/>
    <property type="match status" value="1"/>
</dbReference>
<dbReference type="PROSITE" id="PS50975">
    <property type="entry name" value="ATP_GRASP"/>
    <property type="match status" value="1"/>
</dbReference>
<reference key="1">
    <citation type="journal article" date="2006" name="J. Bacteriol.">
        <title>Comparison of the genome sequence of the poultry pathogen Bordetella avium with those of B. bronchiseptica, B. pertussis, and B. parapertussis reveals extensive diversity in surface structures associated with host interaction.</title>
        <authorList>
            <person name="Sebaihia M."/>
            <person name="Preston A."/>
            <person name="Maskell D.J."/>
            <person name="Kuzmiak H."/>
            <person name="Connell T.D."/>
            <person name="King N.D."/>
            <person name="Orndorff P.E."/>
            <person name="Miyamoto D.M."/>
            <person name="Thomson N.R."/>
            <person name="Harris D."/>
            <person name="Goble A."/>
            <person name="Lord A."/>
            <person name="Murphy L."/>
            <person name="Quail M.A."/>
            <person name="Rutter S."/>
            <person name="Squares R."/>
            <person name="Squares S."/>
            <person name="Woodward J."/>
            <person name="Parkhill J."/>
            <person name="Temple L.M."/>
        </authorList>
    </citation>
    <scope>NUCLEOTIDE SEQUENCE [LARGE SCALE GENOMIC DNA]</scope>
    <source>
        <strain>197N</strain>
    </source>
</reference>